<comment type="function">
    <text evidence="3">Odorant receptor.</text>
</comment>
<comment type="subcellular location">
    <subcellularLocation>
        <location>Cell membrane</location>
        <topology>Multi-pass membrane protein</topology>
    </subcellularLocation>
</comment>
<comment type="similarity">
    <text evidence="2">Belongs to the G-protein coupled receptor 1 family.</text>
</comment>
<comment type="online information" name="Human Olfactory Receptor Data Exploratorium (HORDE)">
    <link uri="http://genome.weizmann.ac.il/horde/card/index/symbol:OR6P1"/>
</comment>
<protein>
    <recommendedName>
        <fullName>Olfactory receptor 6P1</fullName>
    </recommendedName>
    <alternativeName>
        <fullName>Olfactory receptor OR1-12</fullName>
    </alternativeName>
</protein>
<accession>Q8NGX9</accession>
<accession>Q6IFR9</accession>
<proteinExistence type="inferred from homology"/>
<reference key="1">
    <citation type="submission" date="2001-07" db="EMBL/GenBank/DDBJ databases">
        <title>Genome-wide discovery and analysis of human seven transmembrane helix receptor genes.</title>
        <authorList>
            <person name="Suwa M."/>
            <person name="Sato T."/>
            <person name="Okouchi I."/>
            <person name="Arita M."/>
            <person name="Futami K."/>
            <person name="Matsumoto S."/>
            <person name="Tsutsumi S."/>
            <person name="Aburatani H."/>
            <person name="Asai K."/>
            <person name="Akiyama Y."/>
        </authorList>
    </citation>
    <scope>NUCLEOTIDE SEQUENCE [GENOMIC DNA]</scope>
</reference>
<reference key="2">
    <citation type="journal article" date="2006" name="Nature">
        <title>The DNA sequence and biological annotation of human chromosome 1.</title>
        <authorList>
            <person name="Gregory S.G."/>
            <person name="Barlow K.F."/>
            <person name="McLay K.E."/>
            <person name="Kaul R."/>
            <person name="Swarbreck D."/>
            <person name="Dunham A."/>
            <person name="Scott C.E."/>
            <person name="Howe K.L."/>
            <person name="Woodfine K."/>
            <person name="Spencer C.C.A."/>
            <person name="Jones M.C."/>
            <person name="Gillson C."/>
            <person name="Searle S."/>
            <person name="Zhou Y."/>
            <person name="Kokocinski F."/>
            <person name="McDonald L."/>
            <person name="Evans R."/>
            <person name="Phillips K."/>
            <person name="Atkinson A."/>
            <person name="Cooper R."/>
            <person name="Jones C."/>
            <person name="Hall R.E."/>
            <person name="Andrews T.D."/>
            <person name="Lloyd C."/>
            <person name="Ainscough R."/>
            <person name="Almeida J.P."/>
            <person name="Ambrose K.D."/>
            <person name="Anderson F."/>
            <person name="Andrew R.W."/>
            <person name="Ashwell R.I.S."/>
            <person name="Aubin K."/>
            <person name="Babbage A.K."/>
            <person name="Bagguley C.L."/>
            <person name="Bailey J."/>
            <person name="Beasley H."/>
            <person name="Bethel G."/>
            <person name="Bird C.P."/>
            <person name="Bray-Allen S."/>
            <person name="Brown J.Y."/>
            <person name="Brown A.J."/>
            <person name="Buckley D."/>
            <person name="Burton J."/>
            <person name="Bye J."/>
            <person name="Carder C."/>
            <person name="Chapman J.C."/>
            <person name="Clark S.Y."/>
            <person name="Clarke G."/>
            <person name="Clee C."/>
            <person name="Cobley V."/>
            <person name="Collier R.E."/>
            <person name="Corby N."/>
            <person name="Coville G.J."/>
            <person name="Davies J."/>
            <person name="Deadman R."/>
            <person name="Dunn M."/>
            <person name="Earthrowl M."/>
            <person name="Ellington A.G."/>
            <person name="Errington H."/>
            <person name="Frankish A."/>
            <person name="Frankland J."/>
            <person name="French L."/>
            <person name="Garner P."/>
            <person name="Garnett J."/>
            <person name="Gay L."/>
            <person name="Ghori M.R.J."/>
            <person name="Gibson R."/>
            <person name="Gilby L.M."/>
            <person name="Gillett W."/>
            <person name="Glithero R.J."/>
            <person name="Grafham D.V."/>
            <person name="Griffiths C."/>
            <person name="Griffiths-Jones S."/>
            <person name="Grocock R."/>
            <person name="Hammond S."/>
            <person name="Harrison E.S.I."/>
            <person name="Hart E."/>
            <person name="Haugen E."/>
            <person name="Heath P.D."/>
            <person name="Holmes S."/>
            <person name="Holt K."/>
            <person name="Howden P.J."/>
            <person name="Hunt A.R."/>
            <person name="Hunt S.E."/>
            <person name="Hunter G."/>
            <person name="Isherwood J."/>
            <person name="James R."/>
            <person name="Johnson C."/>
            <person name="Johnson D."/>
            <person name="Joy A."/>
            <person name="Kay M."/>
            <person name="Kershaw J.K."/>
            <person name="Kibukawa M."/>
            <person name="Kimberley A.M."/>
            <person name="King A."/>
            <person name="Knights A.J."/>
            <person name="Lad H."/>
            <person name="Laird G."/>
            <person name="Lawlor S."/>
            <person name="Leongamornlert D.A."/>
            <person name="Lloyd D.M."/>
            <person name="Loveland J."/>
            <person name="Lovell J."/>
            <person name="Lush M.J."/>
            <person name="Lyne R."/>
            <person name="Martin S."/>
            <person name="Mashreghi-Mohammadi M."/>
            <person name="Matthews L."/>
            <person name="Matthews N.S.W."/>
            <person name="McLaren S."/>
            <person name="Milne S."/>
            <person name="Mistry S."/>
            <person name="Moore M.J.F."/>
            <person name="Nickerson T."/>
            <person name="O'Dell C.N."/>
            <person name="Oliver K."/>
            <person name="Palmeiri A."/>
            <person name="Palmer S.A."/>
            <person name="Parker A."/>
            <person name="Patel D."/>
            <person name="Pearce A.V."/>
            <person name="Peck A.I."/>
            <person name="Pelan S."/>
            <person name="Phelps K."/>
            <person name="Phillimore B.J."/>
            <person name="Plumb R."/>
            <person name="Rajan J."/>
            <person name="Raymond C."/>
            <person name="Rouse G."/>
            <person name="Saenphimmachak C."/>
            <person name="Sehra H.K."/>
            <person name="Sheridan E."/>
            <person name="Shownkeen R."/>
            <person name="Sims S."/>
            <person name="Skuce C.D."/>
            <person name="Smith M."/>
            <person name="Steward C."/>
            <person name="Subramanian S."/>
            <person name="Sycamore N."/>
            <person name="Tracey A."/>
            <person name="Tromans A."/>
            <person name="Van Helmond Z."/>
            <person name="Wall M."/>
            <person name="Wallis J.M."/>
            <person name="White S."/>
            <person name="Whitehead S.L."/>
            <person name="Wilkinson J.E."/>
            <person name="Willey D.L."/>
            <person name="Williams H."/>
            <person name="Wilming L."/>
            <person name="Wray P.W."/>
            <person name="Wu Z."/>
            <person name="Coulson A."/>
            <person name="Vaudin M."/>
            <person name="Sulston J.E."/>
            <person name="Durbin R.M."/>
            <person name="Hubbard T."/>
            <person name="Wooster R."/>
            <person name="Dunham I."/>
            <person name="Carter N.P."/>
            <person name="McVean G."/>
            <person name="Ross M.T."/>
            <person name="Harrow J."/>
            <person name="Olson M.V."/>
            <person name="Beck S."/>
            <person name="Rogers J."/>
            <person name="Bentley D.R."/>
        </authorList>
    </citation>
    <scope>NUCLEOTIDE SEQUENCE [LARGE SCALE GENOMIC DNA]</scope>
</reference>
<reference key="3">
    <citation type="journal article" date="2004" name="Proc. Natl. Acad. Sci. U.S.A.">
        <title>The human olfactory receptor gene family.</title>
        <authorList>
            <person name="Malnic B."/>
            <person name="Godfrey P.A."/>
            <person name="Buck L.B."/>
        </authorList>
    </citation>
    <scope>IDENTIFICATION</scope>
</reference>
<reference key="4">
    <citation type="journal article" date="2004" name="Proc. Natl. Acad. Sci. U.S.A.">
        <authorList>
            <person name="Malnic B."/>
            <person name="Godfrey P.A."/>
            <person name="Buck L.B."/>
        </authorList>
    </citation>
    <scope>ERRATUM OF PUBMED:14983052</scope>
</reference>
<organism>
    <name type="scientific">Homo sapiens</name>
    <name type="common">Human</name>
    <dbReference type="NCBI Taxonomy" id="9606"/>
    <lineage>
        <taxon>Eukaryota</taxon>
        <taxon>Metazoa</taxon>
        <taxon>Chordata</taxon>
        <taxon>Craniata</taxon>
        <taxon>Vertebrata</taxon>
        <taxon>Euteleostomi</taxon>
        <taxon>Mammalia</taxon>
        <taxon>Eutheria</taxon>
        <taxon>Euarchontoglires</taxon>
        <taxon>Primates</taxon>
        <taxon>Haplorrhini</taxon>
        <taxon>Catarrhini</taxon>
        <taxon>Hominidae</taxon>
        <taxon>Homo</taxon>
    </lineage>
</organism>
<dbReference type="EMBL" id="AB065637">
    <property type="protein sequence ID" value="BAC05863.1"/>
    <property type="molecule type" value="Genomic_DNA"/>
</dbReference>
<dbReference type="EMBL" id="AL160283">
    <property type="status" value="NOT_ANNOTATED_CDS"/>
    <property type="molecule type" value="Genomic_DNA"/>
</dbReference>
<dbReference type="EMBL" id="BK004193">
    <property type="protein sequence ID" value="DAA04591.1"/>
    <property type="molecule type" value="Genomic_DNA"/>
</dbReference>
<dbReference type="CCDS" id="CCDS53391.1"/>
<dbReference type="RefSeq" id="NP_001153797.1">
    <property type="nucleotide sequence ID" value="NM_001160325.2"/>
</dbReference>
<dbReference type="SMR" id="Q8NGX9"/>
<dbReference type="FunCoup" id="Q8NGX9">
    <property type="interactions" value="547"/>
</dbReference>
<dbReference type="STRING" id="9606.ENSP00000492936"/>
<dbReference type="GlyCosmos" id="Q8NGX9">
    <property type="glycosylation" value="2 sites, No reported glycans"/>
</dbReference>
<dbReference type="GlyGen" id="Q8NGX9">
    <property type="glycosylation" value="2 sites"/>
</dbReference>
<dbReference type="BioMuta" id="OR6P1"/>
<dbReference type="DMDM" id="38372784"/>
<dbReference type="PaxDb" id="9606-ENSP00000334721"/>
<dbReference type="Antibodypedia" id="49534">
    <property type="antibodies" value="49 antibodies from 17 providers"/>
</dbReference>
<dbReference type="DNASU" id="128366"/>
<dbReference type="Ensembl" id="ENST00000641540.1">
    <property type="protein sequence ID" value="ENSP00000492936.1"/>
    <property type="gene ID" value="ENSG00000186440.3"/>
</dbReference>
<dbReference type="GeneID" id="128366"/>
<dbReference type="KEGG" id="hsa:128366"/>
<dbReference type="MANE-Select" id="ENST00000641540.1">
    <property type="protein sequence ID" value="ENSP00000492936.1"/>
    <property type="RefSeq nucleotide sequence ID" value="NM_001160325.2"/>
    <property type="RefSeq protein sequence ID" value="NP_001153797.1"/>
</dbReference>
<dbReference type="UCSC" id="uc010pim.2">
    <property type="organism name" value="human"/>
</dbReference>
<dbReference type="AGR" id="HGNC:15036"/>
<dbReference type="CTD" id="128366"/>
<dbReference type="DisGeNET" id="128366"/>
<dbReference type="GeneCards" id="OR6P1"/>
<dbReference type="HGNC" id="HGNC:15036">
    <property type="gene designation" value="OR6P1"/>
</dbReference>
<dbReference type="HPA" id="ENSG00000186440">
    <property type="expression patterns" value="Not detected"/>
</dbReference>
<dbReference type="neXtProt" id="NX_Q8NGX9"/>
<dbReference type="PharmGKB" id="PA32601"/>
<dbReference type="VEuPathDB" id="HostDB:ENSG00000186440"/>
<dbReference type="eggNOG" id="ENOG502RIR8">
    <property type="taxonomic scope" value="Eukaryota"/>
</dbReference>
<dbReference type="GeneTree" id="ENSGT01090000260045"/>
<dbReference type="HOGENOM" id="CLU_012526_1_0_1"/>
<dbReference type="InParanoid" id="Q8NGX9"/>
<dbReference type="OMA" id="AVMGRCH"/>
<dbReference type="OrthoDB" id="9445560at2759"/>
<dbReference type="PAN-GO" id="Q8NGX9">
    <property type="GO annotations" value="0 GO annotations based on evolutionary models"/>
</dbReference>
<dbReference type="PhylomeDB" id="Q8NGX9"/>
<dbReference type="TreeFam" id="TF337475"/>
<dbReference type="PathwayCommons" id="Q8NGX9"/>
<dbReference type="Reactome" id="R-HSA-381753">
    <property type="pathway name" value="Olfactory Signaling Pathway"/>
</dbReference>
<dbReference type="Reactome" id="R-HSA-9752946">
    <property type="pathway name" value="Expression and translocation of olfactory receptors"/>
</dbReference>
<dbReference type="BioGRID-ORCS" id="128366">
    <property type="hits" value="10 hits in 739 CRISPR screens"/>
</dbReference>
<dbReference type="GeneWiki" id="OR6P1"/>
<dbReference type="Pharos" id="Q8NGX9">
    <property type="development level" value="Tdark"/>
</dbReference>
<dbReference type="PRO" id="PR:Q8NGX9"/>
<dbReference type="Proteomes" id="UP000005640">
    <property type="component" value="Chromosome 1"/>
</dbReference>
<dbReference type="RNAct" id="Q8NGX9">
    <property type="molecule type" value="protein"/>
</dbReference>
<dbReference type="ExpressionAtlas" id="Q8NGX9">
    <property type="expression patterns" value="baseline and differential"/>
</dbReference>
<dbReference type="GO" id="GO:0005886">
    <property type="term" value="C:plasma membrane"/>
    <property type="evidence" value="ECO:0000318"/>
    <property type="project" value="GO_Central"/>
</dbReference>
<dbReference type="GO" id="GO:0004930">
    <property type="term" value="F:G protein-coupled receptor activity"/>
    <property type="evidence" value="ECO:0007669"/>
    <property type="project" value="UniProtKB-KW"/>
</dbReference>
<dbReference type="GO" id="GO:0004984">
    <property type="term" value="F:olfactory receptor activity"/>
    <property type="evidence" value="ECO:0000318"/>
    <property type="project" value="GO_Central"/>
</dbReference>
<dbReference type="GO" id="GO:0050911">
    <property type="term" value="P:detection of chemical stimulus involved in sensory perception of smell"/>
    <property type="evidence" value="ECO:0000318"/>
    <property type="project" value="GO_Central"/>
</dbReference>
<dbReference type="CDD" id="cd15224">
    <property type="entry name" value="7tmA_OR6B-like"/>
    <property type="match status" value="1"/>
</dbReference>
<dbReference type="FunFam" id="1.20.1070.10:FF:000001">
    <property type="entry name" value="Olfactory receptor"/>
    <property type="match status" value="1"/>
</dbReference>
<dbReference type="Gene3D" id="1.20.1070.10">
    <property type="entry name" value="Rhodopsin 7-helix transmembrane proteins"/>
    <property type="match status" value="1"/>
</dbReference>
<dbReference type="InterPro" id="IPR000276">
    <property type="entry name" value="GPCR_Rhodpsn"/>
</dbReference>
<dbReference type="InterPro" id="IPR017452">
    <property type="entry name" value="GPCR_Rhodpsn_7TM"/>
</dbReference>
<dbReference type="InterPro" id="IPR000725">
    <property type="entry name" value="Olfact_rcpt"/>
</dbReference>
<dbReference type="InterPro" id="IPR050939">
    <property type="entry name" value="Olfactory_GPCR1"/>
</dbReference>
<dbReference type="PANTHER" id="PTHR24242">
    <property type="entry name" value="G-PROTEIN COUPLED RECEPTOR"/>
    <property type="match status" value="1"/>
</dbReference>
<dbReference type="PANTHER" id="PTHR24242:SF359">
    <property type="entry name" value="ODORANT RECEPTOR-RELATED"/>
    <property type="match status" value="1"/>
</dbReference>
<dbReference type="Pfam" id="PF13853">
    <property type="entry name" value="7tm_4"/>
    <property type="match status" value="1"/>
</dbReference>
<dbReference type="PRINTS" id="PR00237">
    <property type="entry name" value="GPCRRHODOPSN"/>
</dbReference>
<dbReference type="PRINTS" id="PR00245">
    <property type="entry name" value="OLFACTORYR"/>
</dbReference>
<dbReference type="SUPFAM" id="SSF81321">
    <property type="entry name" value="Family A G protein-coupled receptor-like"/>
    <property type="match status" value="1"/>
</dbReference>
<dbReference type="PROSITE" id="PS00237">
    <property type="entry name" value="G_PROTEIN_RECEP_F1_1"/>
    <property type="match status" value="1"/>
</dbReference>
<dbReference type="PROSITE" id="PS50262">
    <property type="entry name" value="G_PROTEIN_RECEP_F1_2"/>
    <property type="match status" value="1"/>
</dbReference>
<keyword id="KW-1003">Cell membrane</keyword>
<keyword id="KW-1015">Disulfide bond</keyword>
<keyword id="KW-0297">G-protein coupled receptor</keyword>
<keyword id="KW-0325">Glycoprotein</keyword>
<keyword id="KW-0472">Membrane</keyword>
<keyword id="KW-0552">Olfaction</keyword>
<keyword id="KW-0675">Receptor</keyword>
<keyword id="KW-1185">Reference proteome</keyword>
<keyword id="KW-0716">Sensory transduction</keyword>
<keyword id="KW-0807">Transducer</keyword>
<keyword id="KW-0812">Transmembrane</keyword>
<keyword id="KW-1133">Transmembrane helix</keyword>
<name>OR6P1_HUMAN</name>
<sequence>MRNLSGGHVEEFVLVGFPTTPPLQLLLFVLFFAIYLLTLLENALIVFTIWLAPSLHRPMYFFLGHLSFLELWYINVTIPRLLAAFLTQDGRVSYVGCMTQLYFFIALACTECVLLAVMAYDRYLAICGPLLYPSLMPSSLATRLAAASWGSGFFSSMMKLLFISQLSYCGPNIINHFFCDISPLLNLTCSDKEQAELVDFLLALVMILLPLLAVVSSYTAIIAAILRIPTSRGRHKAFSTCAAHLAVVVIYYSSTLFTYARPRAMYTFNHNKIISVLYTIIVPFFNPAIYCLRNKEVKEAFRKTVMGRCHYPRDVQD</sequence>
<gene>
    <name type="primary">OR6P1</name>
</gene>
<evidence type="ECO:0000255" key="1"/>
<evidence type="ECO:0000255" key="2">
    <source>
        <dbReference type="PROSITE-ProRule" id="PRU00521"/>
    </source>
</evidence>
<evidence type="ECO:0000305" key="3"/>
<feature type="chain" id="PRO_0000150635" description="Olfactory receptor 6P1">
    <location>
        <begin position="1"/>
        <end position="317"/>
    </location>
</feature>
<feature type="topological domain" description="Extracellular" evidence="1">
    <location>
        <begin position="1"/>
        <end position="25"/>
    </location>
</feature>
<feature type="transmembrane region" description="Helical; Name=1" evidence="1">
    <location>
        <begin position="26"/>
        <end position="46"/>
    </location>
</feature>
<feature type="topological domain" description="Cytoplasmic" evidence="1">
    <location>
        <begin position="47"/>
        <end position="54"/>
    </location>
</feature>
<feature type="transmembrane region" description="Helical; Name=2" evidence="1">
    <location>
        <begin position="55"/>
        <end position="75"/>
    </location>
</feature>
<feature type="topological domain" description="Extracellular" evidence="1">
    <location>
        <begin position="76"/>
        <end position="99"/>
    </location>
</feature>
<feature type="transmembrane region" description="Helical; Name=3" evidence="1">
    <location>
        <begin position="100"/>
        <end position="120"/>
    </location>
</feature>
<feature type="topological domain" description="Cytoplasmic" evidence="1">
    <location>
        <begin position="121"/>
        <end position="139"/>
    </location>
</feature>
<feature type="transmembrane region" description="Helical; Name=4" evidence="1">
    <location>
        <begin position="140"/>
        <end position="160"/>
    </location>
</feature>
<feature type="topological domain" description="Extracellular" evidence="1">
    <location>
        <begin position="161"/>
        <end position="197"/>
    </location>
</feature>
<feature type="transmembrane region" description="Helical; Name=5" evidence="1">
    <location>
        <begin position="198"/>
        <end position="217"/>
    </location>
</feature>
<feature type="topological domain" description="Cytoplasmic" evidence="1">
    <location>
        <begin position="218"/>
        <end position="237"/>
    </location>
</feature>
<feature type="transmembrane region" description="Helical; Name=6" evidence="1">
    <location>
        <begin position="238"/>
        <end position="258"/>
    </location>
</feature>
<feature type="topological domain" description="Extracellular" evidence="1">
    <location>
        <begin position="259"/>
        <end position="271"/>
    </location>
</feature>
<feature type="transmembrane region" description="Helical; Name=7" evidence="1">
    <location>
        <begin position="272"/>
        <end position="292"/>
    </location>
</feature>
<feature type="topological domain" description="Cytoplasmic" evidence="1">
    <location>
        <begin position="293"/>
        <end position="317"/>
    </location>
</feature>
<feature type="glycosylation site" description="N-linked (GlcNAc...) asparagine" evidence="1">
    <location>
        <position position="3"/>
    </location>
</feature>
<feature type="glycosylation site" description="N-linked (GlcNAc...) asparagine" evidence="1">
    <location>
        <position position="186"/>
    </location>
</feature>
<feature type="disulfide bond" evidence="2">
    <location>
        <begin position="97"/>
        <end position="189"/>
    </location>
</feature>